<reference key="1">
    <citation type="journal article" date="1998" name="Science">
        <title>Genome sequence of the nematode C. elegans: a platform for investigating biology.</title>
        <authorList>
            <consortium name="The C. elegans sequencing consortium"/>
        </authorList>
    </citation>
    <scope>NUCLEOTIDE SEQUENCE [LARGE SCALE GENOMIC DNA]</scope>
    <source>
        <strain>Bristol N2</strain>
    </source>
</reference>
<proteinExistence type="inferred from homology"/>
<comment type="function">
    <molecule>Isoform a</molecule>
    <text evidence="3">Probably forms a complex with isoform b that catalyzes the conversion of 5'-GTP to cyclic pyranopterin monophosphate (cPMP) (By similarity). Catalyzes the cyclization of GTP to (8S)-3',8-cyclo-7,8-dihydroguanosine 5'-triphosphate and mocs1b catalyzes the subsequent conversion of (8S)-3',8-cyclo-7,8-dihydroguanosine 5'-triphosphate to cPMP (By similarity).</text>
</comment>
<comment type="function">
    <molecule>Isoform b</molecule>
    <text evidence="3">Probably forms a complex with isoform a that catalyzes the conversion of 5'-GTP to cyclic pyranopterin monophosphate (cPMP).</text>
</comment>
<comment type="catalytic activity">
    <reaction evidence="2">
        <text>GTP + AH2 + S-adenosyl-L-methionine = (8S)-3',8-cyclo-7,8-dihydroguanosine 5'-triphosphate + 5'-deoxyadenosine + L-methionine + A + H(+)</text>
        <dbReference type="Rhea" id="RHEA:49576"/>
        <dbReference type="ChEBI" id="CHEBI:13193"/>
        <dbReference type="ChEBI" id="CHEBI:15378"/>
        <dbReference type="ChEBI" id="CHEBI:17319"/>
        <dbReference type="ChEBI" id="CHEBI:17499"/>
        <dbReference type="ChEBI" id="CHEBI:37565"/>
        <dbReference type="ChEBI" id="CHEBI:57844"/>
        <dbReference type="ChEBI" id="CHEBI:59789"/>
        <dbReference type="ChEBI" id="CHEBI:131766"/>
        <dbReference type="EC" id="4.1.99.22"/>
    </reaction>
</comment>
<comment type="catalytic activity">
    <reaction evidence="3">
        <text>(8S)-3',8-cyclo-7,8-dihydroguanosine 5'-triphosphate = cyclic pyranopterin phosphate + diphosphate</text>
        <dbReference type="Rhea" id="RHEA:49580"/>
        <dbReference type="ChEBI" id="CHEBI:33019"/>
        <dbReference type="ChEBI" id="CHEBI:59648"/>
        <dbReference type="ChEBI" id="CHEBI:131766"/>
        <dbReference type="EC" id="4.6.1.17"/>
    </reaction>
</comment>
<comment type="cofactor">
    <cofactor evidence="3">
        <name>[4Fe-4S] cluster</name>
        <dbReference type="ChEBI" id="CHEBI:49883"/>
    </cofactor>
    <text evidence="3">Binds 2 [4Fe-4S] clusters. Binds 1 [4Fe-4S] cluster coordinated with 3 cysteines and an exchangeable S-adenosyl-L-methionine and 1 [4Fe-4S] cluster coordinated with 3 cysteines and the GTP-derived substrate.</text>
</comment>
<comment type="pathway">
    <text>Cofactor biosynthesis; molybdopterin biosynthesis.</text>
</comment>
<comment type="subunit">
    <text evidence="3">Isoform a and isoform b probably form a heterooligomer.</text>
</comment>
<comment type="alternative products">
    <event type="alternative splicing"/>
    <isoform>
        <id>Q20624-1</id>
        <name evidence="9">b</name>
        <sequence type="displayed"/>
    </isoform>
    <isoform>
        <id>Q20624-2</id>
        <name evidence="8">a</name>
        <sequence type="described" ref="VSP_011903 VSP_011904"/>
    </isoform>
    <isoform>
        <id>Q20624-3</id>
        <name evidence="10">c</name>
        <sequence type="described" ref="VSP_060751 VSP_060752"/>
    </isoform>
    <isoform>
        <id>Q20624-4</id>
        <name evidence="11">d</name>
        <sequence type="described" ref="VSP_060750"/>
    </isoform>
</comment>
<comment type="similarity">
    <text evidence="7">In the C-terminal section; belongs to the MoaC family.</text>
</comment>
<comment type="similarity">
    <text evidence="7">In the N-terminal section; belongs to the radical SAM superfamily. MoaA family.</text>
</comment>
<accession>Q20624</accession>
<accession>A0A2C9C399</accession>
<accession>A0A2C9C3F0</accession>
<accession>Q8T8M9</accession>
<accession>Q8T8N0</accession>
<gene>
    <name evidence="9" type="primary">moc-5</name>
    <name evidence="9" type="ORF">F49E2.1</name>
</gene>
<evidence type="ECO:0000250" key="1"/>
<evidence type="ECO:0000250" key="2">
    <source>
        <dbReference type="UniProtKB" id="P69848"/>
    </source>
</evidence>
<evidence type="ECO:0000250" key="3">
    <source>
        <dbReference type="UniProtKB" id="Q9NZB8"/>
    </source>
</evidence>
<evidence type="ECO:0000255" key="4"/>
<evidence type="ECO:0000255" key="5">
    <source>
        <dbReference type="PROSITE-ProRule" id="PRU01266"/>
    </source>
</evidence>
<evidence type="ECO:0000256" key="6">
    <source>
        <dbReference type="SAM" id="MobiDB-lite"/>
    </source>
</evidence>
<evidence type="ECO:0000305" key="7"/>
<evidence type="ECO:0000312" key="8">
    <source>
        <dbReference type="WormBase" id="F49E2.1a"/>
    </source>
</evidence>
<evidence type="ECO:0000312" key="9">
    <source>
        <dbReference type="WormBase" id="F49E2.1b"/>
    </source>
</evidence>
<evidence type="ECO:0000312" key="10">
    <source>
        <dbReference type="WormBase" id="F49E2.1c"/>
    </source>
</evidence>
<evidence type="ECO:0000312" key="11">
    <source>
        <dbReference type="WormBase" id="F49E2.1d"/>
    </source>
</evidence>
<keyword id="KW-0004">4Fe-4S</keyword>
<keyword id="KW-0025">Alternative splicing</keyword>
<keyword id="KW-0342">GTP-binding</keyword>
<keyword id="KW-0408">Iron</keyword>
<keyword id="KW-0411">Iron-sulfur</keyword>
<keyword id="KW-0456">Lyase</keyword>
<keyword id="KW-0479">Metal-binding</keyword>
<keyword id="KW-0501">Molybdenum cofactor biosynthesis</keyword>
<keyword id="KW-0547">Nucleotide-binding</keyword>
<keyword id="KW-1185">Reference proteome</keyword>
<keyword id="KW-0949">S-adenosyl-L-methionine</keyword>
<name>MOCS1_CAEEL</name>
<protein>
    <recommendedName>
        <fullName evidence="7">Molybdenum cofactor biosynthesis protein moc-5</fullName>
    </recommendedName>
    <domain>
        <recommendedName>
            <fullName>GTP 3',8-cyclase</fullName>
            <ecNumber evidence="2">4.1.99.22</ecNumber>
        </recommendedName>
        <alternativeName>
            <fullName>Molybdenum cofactor biosynthesis protein A</fullName>
        </alternativeName>
    </domain>
    <domain>
        <recommendedName>
            <fullName>Cyclic pyranopterin monophosphate synthase</fullName>
            <ecNumber evidence="3">4.6.1.17</ecNumber>
        </recommendedName>
        <alternativeName>
            <fullName>Molybdenum cofactor biosynthesis protein C</fullName>
        </alternativeName>
    </domain>
</protein>
<organism>
    <name type="scientific">Caenorhabditis elegans</name>
    <dbReference type="NCBI Taxonomy" id="6239"/>
    <lineage>
        <taxon>Eukaryota</taxon>
        <taxon>Metazoa</taxon>
        <taxon>Ecdysozoa</taxon>
        <taxon>Nematoda</taxon>
        <taxon>Chromadorea</taxon>
        <taxon>Rhabditida</taxon>
        <taxon>Rhabditina</taxon>
        <taxon>Rhabditomorpha</taxon>
        <taxon>Rhabditoidea</taxon>
        <taxon>Rhabditidae</taxon>
        <taxon>Peloderinae</taxon>
        <taxon>Caenorhabditis</taxon>
    </lineage>
</organism>
<feature type="chain" id="PRO_0000153033" description="Molybdenum cofactor biosynthesis protein moc-5">
    <location>
        <begin position="1"/>
        <end position="600"/>
    </location>
</feature>
<feature type="domain" description="Radical SAM core" evidence="5">
    <location>
        <begin position="68"/>
        <end position="284"/>
    </location>
</feature>
<feature type="region of interest" description="Molybdenum cofactor biosynthesis protein A">
    <location>
        <begin position="4"/>
        <end position="371"/>
    </location>
</feature>
<feature type="region of interest" description="Disordered" evidence="6">
    <location>
        <begin position="369"/>
        <end position="390"/>
    </location>
</feature>
<feature type="region of interest" description="Molybdenum cofactor biosynthesis protein C">
    <location>
        <begin position="396"/>
        <end position="595"/>
    </location>
</feature>
<feature type="active site" description="For molybdenum cofactor biosynthesis protein C activity" evidence="4">
    <location>
        <position position="566"/>
    </location>
</feature>
<feature type="binding site" evidence="1">
    <location>
        <position position="77"/>
    </location>
    <ligand>
        <name>GTP</name>
        <dbReference type="ChEBI" id="CHEBI:37565"/>
    </ligand>
</feature>
<feature type="binding site" evidence="1">
    <location>
        <position position="84"/>
    </location>
    <ligand>
        <name>[4Fe-4S] cluster</name>
        <dbReference type="ChEBI" id="CHEBI:49883"/>
        <label>1</label>
        <note>4Fe-4S-S-AdoMet</note>
    </ligand>
</feature>
<feature type="binding site" evidence="1">
    <location>
        <position position="88"/>
    </location>
    <ligand>
        <name>[4Fe-4S] cluster</name>
        <dbReference type="ChEBI" id="CHEBI:49883"/>
        <label>1</label>
        <note>4Fe-4S-S-AdoMet</note>
    </ligand>
</feature>
<feature type="binding site" evidence="1">
    <location>
        <position position="90"/>
    </location>
    <ligand>
        <name>S-adenosyl-L-methionine</name>
        <dbReference type="ChEBI" id="CHEBI:59789"/>
    </ligand>
</feature>
<feature type="binding site" evidence="1">
    <location>
        <position position="91"/>
    </location>
    <ligand>
        <name>[4Fe-4S] cluster</name>
        <dbReference type="ChEBI" id="CHEBI:49883"/>
        <label>1</label>
        <note>4Fe-4S-S-AdoMet</note>
    </ligand>
</feature>
<feature type="binding site" evidence="1">
    <location>
        <position position="127"/>
    </location>
    <ligand>
        <name>GTP</name>
        <dbReference type="ChEBI" id="CHEBI:37565"/>
    </ligand>
</feature>
<feature type="binding site" evidence="1">
    <location>
        <position position="131"/>
    </location>
    <ligand>
        <name>S-adenosyl-L-methionine</name>
        <dbReference type="ChEBI" id="CHEBI:59789"/>
    </ligand>
</feature>
<feature type="binding site" evidence="1">
    <location>
        <position position="158"/>
    </location>
    <ligand>
        <name>GTP</name>
        <dbReference type="ChEBI" id="CHEBI:37565"/>
    </ligand>
</feature>
<feature type="binding site" evidence="1">
    <location>
        <position position="182"/>
    </location>
    <ligand>
        <name>S-adenosyl-L-methionine</name>
        <dbReference type="ChEBI" id="CHEBI:59789"/>
    </ligand>
</feature>
<feature type="binding site" evidence="1">
    <location>
        <position position="218"/>
    </location>
    <ligand>
        <name>GTP</name>
        <dbReference type="ChEBI" id="CHEBI:37565"/>
    </ligand>
</feature>
<feature type="binding site" evidence="1">
    <location>
        <position position="252"/>
    </location>
    <ligand>
        <name>S-adenosyl-L-methionine</name>
        <dbReference type="ChEBI" id="CHEBI:59789"/>
    </ligand>
</feature>
<feature type="binding site" evidence="1">
    <location>
        <position position="316"/>
    </location>
    <ligand>
        <name>[4Fe-4S] cluster</name>
        <dbReference type="ChEBI" id="CHEBI:49883"/>
        <label>2</label>
        <note>4Fe-4S-substrate</note>
    </ligand>
</feature>
<feature type="binding site" evidence="1">
    <location>
        <position position="319"/>
    </location>
    <ligand>
        <name>[4Fe-4S] cluster</name>
        <dbReference type="ChEBI" id="CHEBI:49883"/>
        <label>2</label>
        <note>4Fe-4S-substrate</note>
    </ligand>
</feature>
<feature type="binding site" evidence="1">
    <location>
        <begin position="321"/>
        <end position="323"/>
    </location>
    <ligand>
        <name>GTP</name>
        <dbReference type="ChEBI" id="CHEBI:37565"/>
    </ligand>
</feature>
<feature type="binding site" evidence="1">
    <location>
        <position position="333"/>
    </location>
    <ligand>
        <name>[4Fe-4S] cluster</name>
        <dbReference type="ChEBI" id="CHEBI:49883"/>
        <label>2</label>
        <note>4Fe-4S-substrate</note>
    </ligand>
</feature>
<feature type="splice variant" id="VSP_060750" description="In isoform d." evidence="7">
    <location>
        <begin position="1"/>
        <end position="550"/>
    </location>
</feature>
<feature type="splice variant" id="VSP_011903" description="In isoform a." evidence="7">
    <original>VFRNGRSEEPAKSSNDSY</original>
    <variation>GMDALKNLPNRPMILIGG</variation>
    <location>
        <begin position="372"/>
        <end position="389"/>
    </location>
</feature>
<feature type="splice variant" id="VSP_011904" description="In isoform a." evidence="7">
    <location>
        <begin position="390"/>
        <end position="600"/>
    </location>
</feature>
<feature type="splice variant" id="VSP_060751" description="In isoform c." evidence="7">
    <original>LTAEISRQISENTIKKGDV</original>
    <variation>VSFSTNYEIMLIWNKFFYF</variation>
    <location>
        <begin position="474"/>
        <end position="492"/>
    </location>
</feature>
<feature type="splice variant" id="VSP_060752" description="In isoform c." evidence="7">
    <location>
        <begin position="493"/>
        <end position="600"/>
    </location>
</feature>
<sequence>MSCRAGKKLFQWSRVKSSTEEIVKQLTVPLREHAEPILTLTPEQKREAVRLKIQEIEHTKGQPPFFDMFMREHTYLRISLTEKCNFRCLYCMPAEGVPLKPKDKMLSNSEVLRLVKLFAAHGVDKVRLTGGEPTIRKDIVHIVEGISSTPGIKEVGITTNGLVLQRFLPQLRDAGLTKINISIDSLDREKFAKMTRRDGFDKVWKAIELARGYYPKVKLNVVVLKHQNENEVVDFVNLTKDRNLDVRFIEFMPFGGNEFKNDNFIGYREMLNLIVDKYGDGVIRLSDSPNDTTKAYKIDGFQGQFGFITSMSDHFCNTCNRLRITADGNLKVCLHGNSEVSLRDRIRCGDSDEQLSEVIQKAVNNKKARHAVFRNGRSEEPAKSSNDSYRGLTPVTSASSILVHLPSSSLYHSHLHSSRHFFISQIRCFSTTYSVSSITHLLTHVDNNGNAKQVDVSQKDTSTRTAVARGTIILTAEISRQISENTIKKGDVLTVAKIASILGAKQVANLIPLCHPIRLDFVDTVFNHDIENSKLHCISTARCSGNTGVEMEALTACTIALLTVYDMCKAISQKMMLTNIYLVHKSGGKTTYTIDNENQI</sequence>
<dbReference type="EC" id="4.1.99.22" evidence="2"/>
<dbReference type="EC" id="4.6.1.17" evidence="3"/>
<dbReference type="EMBL" id="BX284606">
    <property type="protein sequence ID" value="CAC42301.1"/>
    <property type="molecule type" value="Genomic_DNA"/>
</dbReference>
<dbReference type="EMBL" id="BX284606">
    <property type="protein sequence ID" value="CAC42302.1"/>
    <property type="molecule type" value="Genomic_DNA"/>
</dbReference>
<dbReference type="EMBL" id="BX284606">
    <property type="protein sequence ID" value="SOF58879.1"/>
    <property type="molecule type" value="Genomic_DNA"/>
</dbReference>
<dbReference type="EMBL" id="BX284606">
    <property type="protein sequence ID" value="SOF58880.1"/>
    <property type="molecule type" value="Genomic_DNA"/>
</dbReference>
<dbReference type="PIR" id="T22460">
    <property type="entry name" value="T22460"/>
</dbReference>
<dbReference type="RefSeq" id="NP_001343868.1">
    <molecule id="Q20624-3"/>
    <property type="nucleotide sequence ID" value="NM_001356794.4"/>
</dbReference>
<dbReference type="RefSeq" id="NP_001380230.1">
    <molecule id="Q20624-4"/>
    <property type="nucleotide sequence ID" value="NM_001392824.1"/>
</dbReference>
<dbReference type="RefSeq" id="NP_509611.3">
    <molecule id="Q20624-2"/>
    <property type="nucleotide sequence ID" value="NM_077210.5"/>
</dbReference>
<dbReference type="RefSeq" id="NP_509612.2">
    <molecule id="Q20624-1"/>
    <property type="nucleotide sequence ID" value="NM_077211.4"/>
</dbReference>
<dbReference type="SMR" id="Q20624"/>
<dbReference type="FunCoup" id="Q20624">
    <property type="interactions" value="996"/>
</dbReference>
<dbReference type="IntAct" id="Q20624">
    <property type="interactions" value="1"/>
</dbReference>
<dbReference type="STRING" id="6239.F49E2.1b.1"/>
<dbReference type="PaxDb" id="6239-F49E2.1b"/>
<dbReference type="PeptideAtlas" id="Q20624"/>
<dbReference type="EnsemblMetazoa" id="F49E2.1a.1">
    <molecule id="Q20624-2"/>
    <property type="protein sequence ID" value="F49E2.1a.1"/>
    <property type="gene ID" value="WBGene00009885"/>
</dbReference>
<dbReference type="EnsemblMetazoa" id="F49E2.1a.2">
    <molecule id="Q20624-2"/>
    <property type="protein sequence ID" value="F49E2.1a.2"/>
    <property type="gene ID" value="WBGene00009885"/>
</dbReference>
<dbReference type="EnsemblMetazoa" id="F49E2.1a.3">
    <molecule id="Q20624-2"/>
    <property type="protein sequence ID" value="F49E2.1a.3"/>
    <property type="gene ID" value="WBGene00009885"/>
</dbReference>
<dbReference type="EnsemblMetazoa" id="F49E2.1b.1">
    <molecule id="Q20624-1"/>
    <property type="protein sequence ID" value="F49E2.1b.1"/>
    <property type="gene ID" value="WBGene00009885"/>
</dbReference>
<dbReference type="EnsemblMetazoa" id="F49E2.1c.1">
    <molecule id="Q20624-3"/>
    <property type="protein sequence ID" value="F49E2.1c.1"/>
    <property type="gene ID" value="WBGene00009885"/>
</dbReference>
<dbReference type="EnsemblMetazoa" id="F49E2.1d.1">
    <molecule id="Q20624-4"/>
    <property type="protein sequence ID" value="F49E2.1d.1"/>
    <property type="gene ID" value="WBGene00009885"/>
</dbReference>
<dbReference type="EnsemblMetazoa" id="F49E2.1d.2">
    <molecule id="Q20624-4"/>
    <property type="protein sequence ID" value="F49E2.1d.2"/>
    <property type="gene ID" value="WBGene00009885"/>
</dbReference>
<dbReference type="EnsemblMetazoa" id="F49E2.1d.3">
    <molecule id="Q20624-4"/>
    <property type="protein sequence ID" value="F49E2.1d.3"/>
    <property type="gene ID" value="WBGene00009885"/>
</dbReference>
<dbReference type="EnsemblMetazoa" id="F49E2.1d.4">
    <molecule id="Q20624-4"/>
    <property type="protein sequence ID" value="F49E2.1d.4"/>
    <property type="gene ID" value="WBGene00009885"/>
</dbReference>
<dbReference type="GeneID" id="181176"/>
<dbReference type="KEGG" id="cel:CELE_F49E2.1"/>
<dbReference type="UCSC" id="F49E2.1b">
    <molecule id="Q20624-1"/>
    <property type="organism name" value="c. elegans"/>
</dbReference>
<dbReference type="AGR" id="WB:WBGene00009885"/>
<dbReference type="CTD" id="181176"/>
<dbReference type="WormBase" id="F49E2.1a">
    <molecule id="Q20624-2"/>
    <property type="protein sequence ID" value="CE27759"/>
    <property type="gene ID" value="WBGene00009885"/>
    <property type="gene designation" value="moc-5"/>
</dbReference>
<dbReference type="WormBase" id="F49E2.1b">
    <molecule id="Q20624-1"/>
    <property type="protein sequence ID" value="CE27760"/>
    <property type="gene ID" value="WBGene00009885"/>
    <property type="gene designation" value="moc-5"/>
</dbReference>
<dbReference type="WormBase" id="F49E2.1c">
    <molecule id="Q20624-3"/>
    <property type="protein sequence ID" value="CE52186"/>
    <property type="gene ID" value="WBGene00009885"/>
    <property type="gene designation" value="moc-5"/>
</dbReference>
<dbReference type="WormBase" id="F49E2.1d">
    <molecule id="Q20624-4"/>
    <property type="protein sequence ID" value="CE52073"/>
    <property type="gene ID" value="WBGene00009885"/>
    <property type="gene designation" value="moc-5"/>
</dbReference>
<dbReference type="eggNOG" id="KOG2876">
    <property type="taxonomic scope" value="Eukaryota"/>
</dbReference>
<dbReference type="GeneTree" id="ENSGT00390000016567"/>
<dbReference type="HOGENOM" id="CLU_009273_7_2_1"/>
<dbReference type="InParanoid" id="Q20624"/>
<dbReference type="OMA" id="QTVHMTS"/>
<dbReference type="OrthoDB" id="429626at2759"/>
<dbReference type="PhylomeDB" id="Q20624"/>
<dbReference type="UniPathway" id="UPA00344"/>
<dbReference type="PRO" id="PR:Q20624"/>
<dbReference type="Proteomes" id="UP000001940">
    <property type="component" value="Chromosome X"/>
</dbReference>
<dbReference type="Bgee" id="WBGene00009885">
    <property type="expression patterns" value="Expressed in pharyngeal muscle cell (C elegans) and 3 other cell types or tissues"/>
</dbReference>
<dbReference type="ExpressionAtlas" id="Q20624">
    <property type="expression patterns" value="baseline and differential"/>
</dbReference>
<dbReference type="GO" id="GO:0051539">
    <property type="term" value="F:4 iron, 4 sulfur cluster binding"/>
    <property type="evidence" value="ECO:0007669"/>
    <property type="project" value="UniProtKB-KW"/>
</dbReference>
<dbReference type="GO" id="GO:0061799">
    <property type="term" value="F:cyclic pyranopterin monophosphate synthase activity"/>
    <property type="evidence" value="ECO:0000318"/>
    <property type="project" value="GO_Central"/>
</dbReference>
<dbReference type="GO" id="GO:0061798">
    <property type="term" value="F:GTP 3',8'-cyclase activity"/>
    <property type="evidence" value="ECO:0000318"/>
    <property type="project" value="GO_Central"/>
</dbReference>
<dbReference type="GO" id="GO:0005525">
    <property type="term" value="F:GTP binding"/>
    <property type="evidence" value="ECO:0007669"/>
    <property type="project" value="UniProtKB-KW"/>
</dbReference>
<dbReference type="GO" id="GO:0046872">
    <property type="term" value="F:metal ion binding"/>
    <property type="evidence" value="ECO:0007669"/>
    <property type="project" value="UniProtKB-KW"/>
</dbReference>
<dbReference type="GO" id="GO:0006777">
    <property type="term" value="P:Mo-molybdopterin cofactor biosynthetic process"/>
    <property type="evidence" value="ECO:0000250"/>
    <property type="project" value="UniProtKB"/>
</dbReference>
<dbReference type="CDD" id="cd01420">
    <property type="entry name" value="MoaC_PE"/>
    <property type="match status" value="1"/>
</dbReference>
<dbReference type="CDD" id="cd01335">
    <property type="entry name" value="Radical_SAM"/>
    <property type="match status" value="1"/>
</dbReference>
<dbReference type="CDD" id="cd21117">
    <property type="entry name" value="Twitch_MoaA"/>
    <property type="match status" value="1"/>
</dbReference>
<dbReference type="Gene3D" id="3.20.20.70">
    <property type="entry name" value="Aldolase class I"/>
    <property type="match status" value="1"/>
</dbReference>
<dbReference type="Gene3D" id="3.30.70.640">
    <property type="entry name" value="Molybdopterin cofactor biosynthesis C (MoaC) domain"/>
    <property type="match status" value="1"/>
</dbReference>
<dbReference type="HAMAP" id="MF_01225_B">
    <property type="entry name" value="MoaA_B"/>
    <property type="match status" value="1"/>
</dbReference>
<dbReference type="InterPro" id="IPR013785">
    <property type="entry name" value="Aldolase_TIM"/>
</dbReference>
<dbReference type="InterPro" id="IPR006638">
    <property type="entry name" value="Elp3/MiaA/NifB-like_rSAM"/>
</dbReference>
<dbReference type="InterPro" id="IPR013483">
    <property type="entry name" value="MoaA"/>
</dbReference>
<dbReference type="InterPro" id="IPR000385">
    <property type="entry name" value="MoaA_NifB_PqqE_Fe-S-bd_CS"/>
</dbReference>
<dbReference type="InterPro" id="IPR010505">
    <property type="entry name" value="MoaA_twitch"/>
</dbReference>
<dbReference type="InterPro" id="IPR023045">
    <property type="entry name" value="MoaC"/>
</dbReference>
<dbReference type="InterPro" id="IPR047594">
    <property type="entry name" value="MoaC_bact/euk"/>
</dbReference>
<dbReference type="InterPro" id="IPR036522">
    <property type="entry name" value="MoaC_sf"/>
</dbReference>
<dbReference type="InterPro" id="IPR050105">
    <property type="entry name" value="MoCo_biosynth_MoaA/MoaC"/>
</dbReference>
<dbReference type="InterPro" id="IPR002820">
    <property type="entry name" value="Mopterin_CF_biosynth-C_dom"/>
</dbReference>
<dbReference type="InterPro" id="IPR007197">
    <property type="entry name" value="rSAM"/>
</dbReference>
<dbReference type="NCBIfam" id="TIGR02666">
    <property type="entry name" value="moaA"/>
    <property type="match status" value="1"/>
</dbReference>
<dbReference type="NCBIfam" id="TIGR00581">
    <property type="entry name" value="moaC"/>
    <property type="match status" value="1"/>
</dbReference>
<dbReference type="NCBIfam" id="NF006870">
    <property type="entry name" value="PRK09364.1"/>
    <property type="match status" value="1"/>
</dbReference>
<dbReference type="PANTHER" id="PTHR22960:SF0">
    <property type="entry name" value="MOLYBDENUM COFACTOR BIOSYNTHESIS PROTEIN 1"/>
    <property type="match status" value="1"/>
</dbReference>
<dbReference type="PANTHER" id="PTHR22960">
    <property type="entry name" value="MOLYBDOPTERIN COFACTOR SYNTHESIS PROTEIN A"/>
    <property type="match status" value="1"/>
</dbReference>
<dbReference type="Pfam" id="PF13353">
    <property type="entry name" value="Fer4_12"/>
    <property type="match status" value="1"/>
</dbReference>
<dbReference type="Pfam" id="PF01967">
    <property type="entry name" value="MoaC"/>
    <property type="match status" value="1"/>
</dbReference>
<dbReference type="Pfam" id="PF06463">
    <property type="entry name" value="Mob_synth_C"/>
    <property type="match status" value="1"/>
</dbReference>
<dbReference type="Pfam" id="PF04055">
    <property type="entry name" value="Radical_SAM"/>
    <property type="match status" value="1"/>
</dbReference>
<dbReference type="SFLD" id="SFLDG01383">
    <property type="entry name" value="cyclic_pyranopterin_phosphate"/>
    <property type="match status" value="1"/>
</dbReference>
<dbReference type="SFLD" id="SFLDG01067">
    <property type="entry name" value="SPASM/twitch_domain_containing"/>
    <property type="match status" value="1"/>
</dbReference>
<dbReference type="SMART" id="SM00729">
    <property type="entry name" value="Elp3"/>
    <property type="match status" value="1"/>
</dbReference>
<dbReference type="SUPFAM" id="SSF55040">
    <property type="entry name" value="Molybdenum cofactor biosynthesis protein C, MoaC"/>
    <property type="match status" value="1"/>
</dbReference>
<dbReference type="SUPFAM" id="SSF102114">
    <property type="entry name" value="Radical SAM enzymes"/>
    <property type="match status" value="1"/>
</dbReference>
<dbReference type="PROSITE" id="PS01305">
    <property type="entry name" value="MOAA_NIFB_PQQE"/>
    <property type="match status" value="1"/>
</dbReference>
<dbReference type="PROSITE" id="PS51918">
    <property type="entry name" value="RADICAL_SAM"/>
    <property type="match status" value="1"/>
</dbReference>